<accession>C4XXB1</accession>
<organism>
    <name type="scientific">Clavispora lusitaniae (strain ATCC 42720)</name>
    <name type="common">Yeast</name>
    <name type="synonym">Candida lusitaniae</name>
    <dbReference type="NCBI Taxonomy" id="306902"/>
    <lineage>
        <taxon>Eukaryota</taxon>
        <taxon>Fungi</taxon>
        <taxon>Dikarya</taxon>
        <taxon>Ascomycota</taxon>
        <taxon>Saccharomycotina</taxon>
        <taxon>Pichiomycetes</taxon>
        <taxon>Metschnikowiaceae</taxon>
        <taxon>Clavispora</taxon>
    </lineage>
</organism>
<gene>
    <name type="primary">AIM21</name>
    <name type="ORF">CLUG_00584</name>
</gene>
<feature type="chain" id="PRO_0000399519" description="Altered inheritance of mitochondria protein 21">
    <location>
        <begin position="1"/>
        <end position="648"/>
    </location>
</feature>
<feature type="region of interest" description="Disordered" evidence="2">
    <location>
        <begin position="1"/>
        <end position="479"/>
    </location>
</feature>
<feature type="region of interest" description="Disordered" evidence="2">
    <location>
        <begin position="511"/>
        <end position="550"/>
    </location>
</feature>
<feature type="region of interest" description="Disordered" evidence="2">
    <location>
        <begin position="571"/>
        <end position="648"/>
    </location>
</feature>
<feature type="compositionally biased region" description="Low complexity" evidence="2">
    <location>
        <begin position="18"/>
        <end position="29"/>
    </location>
</feature>
<feature type="compositionally biased region" description="Basic and acidic residues" evidence="2">
    <location>
        <begin position="89"/>
        <end position="128"/>
    </location>
</feature>
<feature type="compositionally biased region" description="Basic and acidic residues" evidence="2">
    <location>
        <begin position="154"/>
        <end position="189"/>
    </location>
</feature>
<feature type="compositionally biased region" description="Basic and acidic residues" evidence="2">
    <location>
        <begin position="246"/>
        <end position="258"/>
    </location>
</feature>
<feature type="compositionally biased region" description="Basic and acidic residues" evidence="2">
    <location>
        <begin position="290"/>
        <end position="309"/>
    </location>
</feature>
<feature type="compositionally biased region" description="Polar residues" evidence="2">
    <location>
        <begin position="347"/>
        <end position="356"/>
    </location>
</feature>
<feature type="compositionally biased region" description="Polar residues" evidence="2">
    <location>
        <begin position="364"/>
        <end position="377"/>
    </location>
</feature>
<feature type="compositionally biased region" description="Basic and acidic residues" evidence="2">
    <location>
        <begin position="378"/>
        <end position="394"/>
    </location>
</feature>
<feature type="compositionally biased region" description="Low complexity" evidence="2">
    <location>
        <begin position="409"/>
        <end position="433"/>
    </location>
</feature>
<feature type="compositionally biased region" description="Basic residues" evidence="2">
    <location>
        <begin position="538"/>
        <end position="547"/>
    </location>
</feature>
<feature type="compositionally biased region" description="Acidic residues" evidence="2">
    <location>
        <begin position="580"/>
        <end position="595"/>
    </location>
</feature>
<feature type="compositionally biased region" description="Basic and acidic residues" evidence="2">
    <location>
        <begin position="597"/>
        <end position="620"/>
    </location>
</feature>
<feature type="compositionally biased region" description="Low complexity" evidence="2">
    <location>
        <begin position="623"/>
        <end position="635"/>
    </location>
</feature>
<comment type="function">
    <text evidence="1">Involved in mitochondrial migration along actin filaments.</text>
</comment>
<comment type="subcellular location">
    <subcellularLocation>
        <location evidence="1">Cytoplasm</location>
        <location evidence="1">Cytoskeleton</location>
        <location evidence="1">Actin patch</location>
    </subcellularLocation>
    <text evidence="1">Cortical actin patches.</text>
</comment>
<comment type="similarity">
    <text evidence="3">Belongs to the AIM21 family.</text>
</comment>
<proteinExistence type="inferred from homology"/>
<sequence length="648" mass="70548">MDIPRIPQRPKRSKSSEENTPSSTPSSTPAPIVPARPRKNNGAAASSEGSGEFPPIPRRPQRKKNIGETDSEADEKPKDAESDEGWNDSEGKTPEKDIHAALKENADSDKPDIGDSEAEKQPEVDGKDPALNLEKALEANSEEAAIPSEDVTEDVTKSEETKSEDIEASVHIEEKVERESEVADTKGDIEVDDGIEVDDAKEVPISELSETDSAFKSEPTDDAANPVSEEAVKPTEPSEDAEDELVLDRESKTARESEPLEAEDVEEQHDQAMEKASSVTQIGETPSDAKISEDTSESNKGDEDVKENVLLEESGSEPKDSETGSPFQVEESAIVPSEGKPPAEVAETSQTTNKSAESLHSEENLTQAKPATVSDQQPTEKQEPSEQEIPKQESSKQPSKPIVPTRPNKSVPSVPKRPVRSVPASSSPESVQESDAKKAPPPKPKKLSSKIAAFQQMFNQPEAVPTAPQHPKSGKLSSEKIGFAANLQNVMGRGIALPGMANPQMFQRASTDLEEETADVHAEPEQNPQVSKAPQRARGPRGKRLPKAIKETTVKVEPRFQLRVASLWQVEFNKPKETEKVDDDLEEDYEVEPEFVDSVREPESDKETVAEPETSTKDDSVQTESLSNEESTSELPEAITTEHVLDSP</sequence>
<protein>
    <recommendedName>
        <fullName>Altered inheritance of mitochondria protein 21</fullName>
    </recommendedName>
</protein>
<keyword id="KW-0963">Cytoplasm</keyword>
<keyword id="KW-0206">Cytoskeleton</keyword>
<keyword id="KW-1185">Reference proteome</keyword>
<reference key="1">
    <citation type="journal article" date="2009" name="Nature">
        <title>Evolution of pathogenicity and sexual reproduction in eight Candida genomes.</title>
        <authorList>
            <person name="Butler G."/>
            <person name="Rasmussen M.D."/>
            <person name="Lin M.F."/>
            <person name="Santos M.A.S."/>
            <person name="Sakthikumar S."/>
            <person name="Munro C.A."/>
            <person name="Rheinbay E."/>
            <person name="Grabherr M."/>
            <person name="Forche A."/>
            <person name="Reedy J.L."/>
            <person name="Agrafioti I."/>
            <person name="Arnaud M.B."/>
            <person name="Bates S."/>
            <person name="Brown A.J.P."/>
            <person name="Brunke S."/>
            <person name="Costanzo M.C."/>
            <person name="Fitzpatrick D.A."/>
            <person name="de Groot P.W.J."/>
            <person name="Harris D."/>
            <person name="Hoyer L.L."/>
            <person name="Hube B."/>
            <person name="Klis F.M."/>
            <person name="Kodira C."/>
            <person name="Lennard N."/>
            <person name="Logue M.E."/>
            <person name="Martin R."/>
            <person name="Neiman A.M."/>
            <person name="Nikolaou E."/>
            <person name="Quail M.A."/>
            <person name="Quinn J."/>
            <person name="Santos M.C."/>
            <person name="Schmitzberger F.F."/>
            <person name="Sherlock G."/>
            <person name="Shah P."/>
            <person name="Silverstein K.A.T."/>
            <person name="Skrzypek M.S."/>
            <person name="Soll D."/>
            <person name="Staggs R."/>
            <person name="Stansfield I."/>
            <person name="Stumpf M.P.H."/>
            <person name="Sudbery P.E."/>
            <person name="Srikantha T."/>
            <person name="Zeng Q."/>
            <person name="Berman J."/>
            <person name="Berriman M."/>
            <person name="Heitman J."/>
            <person name="Gow N.A.R."/>
            <person name="Lorenz M.C."/>
            <person name="Birren B.W."/>
            <person name="Kellis M."/>
            <person name="Cuomo C.A."/>
        </authorList>
    </citation>
    <scope>NUCLEOTIDE SEQUENCE [LARGE SCALE GENOMIC DNA]</scope>
    <source>
        <strain>ATCC 42720</strain>
    </source>
</reference>
<evidence type="ECO:0000250" key="1"/>
<evidence type="ECO:0000256" key="2">
    <source>
        <dbReference type="SAM" id="MobiDB-lite"/>
    </source>
</evidence>
<evidence type="ECO:0000305" key="3"/>
<name>AIM21_CLAL4</name>
<dbReference type="EMBL" id="CH408076">
    <property type="protein sequence ID" value="EEQ36461.1"/>
    <property type="molecule type" value="Genomic_DNA"/>
</dbReference>
<dbReference type="RefSeq" id="XP_002619425.1">
    <property type="nucleotide sequence ID" value="XM_002619379.1"/>
</dbReference>
<dbReference type="FunCoup" id="C4XXB1">
    <property type="interactions" value="104"/>
</dbReference>
<dbReference type="STRING" id="306902.C4XXB1"/>
<dbReference type="GeneID" id="8500385"/>
<dbReference type="KEGG" id="clu:CLUG_00584"/>
<dbReference type="VEuPathDB" id="FungiDB:CLUG_00584"/>
<dbReference type="HOGENOM" id="CLU_422724_0_0_1"/>
<dbReference type="InParanoid" id="C4XXB1"/>
<dbReference type="OMA" id="FQQMFNQ"/>
<dbReference type="OrthoDB" id="127455at4891"/>
<dbReference type="Proteomes" id="UP000007703">
    <property type="component" value="Unassembled WGS sequence"/>
</dbReference>
<dbReference type="GO" id="GO:0030479">
    <property type="term" value="C:actin cortical patch"/>
    <property type="evidence" value="ECO:0007669"/>
    <property type="project" value="UniProtKB-SubCell"/>
</dbReference>
<dbReference type="InterPro" id="IPR021582">
    <property type="entry name" value="Aim21"/>
</dbReference>
<dbReference type="Pfam" id="PF11489">
    <property type="entry name" value="Aim21"/>
    <property type="match status" value="1"/>
</dbReference>